<reference key="1">
    <citation type="journal article" date="2009" name="Stand. Genomic Sci.">
        <title>Complete genome sequence of Beutenbergia cavernae type strain (HKI 0122).</title>
        <authorList>
            <person name="Land M."/>
            <person name="Pukall R."/>
            <person name="Abt B."/>
            <person name="Goker M."/>
            <person name="Rohde M."/>
            <person name="Glavina Del Rio T."/>
            <person name="Tice H."/>
            <person name="Copeland A."/>
            <person name="Cheng J.F."/>
            <person name="Lucas S."/>
            <person name="Chen F."/>
            <person name="Nolan M."/>
            <person name="Bruce D."/>
            <person name="Goodwin L."/>
            <person name="Pitluck S."/>
            <person name="Ivanova N."/>
            <person name="Mavromatis K."/>
            <person name="Ovchinnikova G."/>
            <person name="Pati A."/>
            <person name="Chen A."/>
            <person name="Palaniappan K."/>
            <person name="Hauser L."/>
            <person name="Chang Y.J."/>
            <person name="Jefferies C.C."/>
            <person name="Saunders E."/>
            <person name="Brettin T."/>
            <person name="Detter J.C."/>
            <person name="Han C."/>
            <person name="Chain P."/>
            <person name="Bristow J."/>
            <person name="Eisen J.A."/>
            <person name="Markowitz V."/>
            <person name="Hugenholtz P."/>
            <person name="Kyrpides N.C."/>
            <person name="Klenk H.P."/>
            <person name="Lapidus A."/>
        </authorList>
    </citation>
    <scope>NUCLEOTIDE SEQUENCE [LARGE SCALE GENOMIC DNA]</scope>
    <source>
        <strain>ATCC BAA-8 / DSM 12333 / CCUG 43141 / JCM 11478 / NBRC 16432 / NCIMB 13614 / HKI 0122</strain>
    </source>
</reference>
<dbReference type="EMBL" id="CP001618">
    <property type="protein sequence ID" value="ACQ78361.1"/>
    <property type="molecule type" value="Genomic_DNA"/>
</dbReference>
<dbReference type="RefSeq" id="WP_012725141.1">
    <property type="nucleotide sequence ID" value="NC_012669.1"/>
</dbReference>
<dbReference type="SMR" id="C5BUY7"/>
<dbReference type="STRING" id="471853.Bcav_0096"/>
<dbReference type="KEGG" id="bcv:Bcav_0096"/>
<dbReference type="eggNOG" id="COG1780">
    <property type="taxonomic scope" value="Bacteria"/>
</dbReference>
<dbReference type="HOGENOM" id="CLU_114845_0_0_11"/>
<dbReference type="OrthoDB" id="350535at2"/>
<dbReference type="Proteomes" id="UP000007962">
    <property type="component" value="Chromosome"/>
</dbReference>
<dbReference type="GO" id="GO:0010181">
    <property type="term" value="F:FMN binding"/>
    <property type="evidence" value="ECO:0007669"/>
    <property type="project" value="InterPro"/>
</dbReference>
<dbReference type="GO" id="GO:0036211">
    <property type="term" value="P:protein modification process"/>
    <property type="evidence" value="ECO:0007669"/>
    <property type="project" value="InterPro"/>
</dbReference>
<dbReference type="Gene3D" id="3.40.50.360">
    <property type="match status" value="1"/>
</dbReference>
<dbReference type="HAMAP" id="MF_00128">
    <property type="entry name" value="NrdI"/>
    <property type="match status" value="1"/>
</dbReference>
<dbReference type="InterPro" id="IPR029039">
    <property type="entry name" value="Flavoprotein-like_sf"/>
</dbReference>
<dbReference type="InterPro" id="IPR020852">
    <property type="entry name" value="RNR_Ib_NrdI_bac"/>
</dbReference>
<dbReference type="InterPro" id="IPR004465">
    <property type="entry name" value="RNR_NrdI"/>
</dbReference>
<dbReference type="NCBIfam" id="TIGR00333">
    <property type="entry name" value="nrdI"/>
    <property type="match status" value="1"/>
</dbReference>
<dbReference type="PANTHER" id="PTHR37297">
    <property type="entry name" value="PROTEIN NRDI"/>
    <property type="match status" value="1"/>
</dbReference>
<dbReference type="PANTHER" id="PTHR37297:SF1">
    <property type="entry name" value="PROTEIN NRDI"/>
    <property type="match status" value="1"/>
</dbReference>
<dbReference type="Pfam" id="PF07972">
    <property type="entry name" value="Flavodoxin_NdrI"/>
    <property type="match status" value="1"/>
</dbReference>
<dbReference type="PIRSF" id="PIRSF005087">
    <property type="entry name" value="NrdI"/>
    <property type="match status" value="1"/>
</dbReference>
<dbReference type="SUPFAM" id="SSF52218">
    <property type="entry name" value="Flavoproteins"/>
    <property type="match status" value="1"/>
</dbReference>
<name>NRDI_BEUC1</name>
<organism>
    <name type="scientific">Beutenbergia cavernae (strain ATCC BAA-8 / DSM 12333 / CCUG 43141 / JCM 11478 / NBRC 16432 / NCIMB 13614 / HKI 0122)</name>
    <dbReference type="NCBI Taxonomy" id="471853"/>
    <lineage>
        <taxon>Bacteria</taxon>
        <taxon>Bacillati</taxon>
        <taxon>Actinomycetota</taxon>
        <taxon>Actinomycetes</taxon>
        <taxon>Micrococcales</taxon>
        <taxon>Beutenbergiaceae</taxon>
        <taxon>Beutenbergia</taxon>
    </lineage>
</organism>
<evidence type="ECO:0000255" key="1">
    <source>
        <dbReference type="HAMAP-Rule" id="MF_00128"/>
    </source>
</evidence>
<comment type="function">
    <text evidence="1">Probably involved in ribonucleotide reductase function.</text>
</comment>
<comment type="similarity">
    <text evidence="1">Belongs to the NrdI family.</text>
</comment>
<keyword id="KW-1185">Reference proteome</keyword>
<feature type="chain" id="PRO_1000203155" description="Protein NrdI">
    <location>
        <begin position="1"/>
        <end position="138"/>
    </location>
</feature>
<accession>C5BUY7</accession>
<proteinExistence type="inferred from homology"/>
<protein>
    <recommendedName>
        <fullName evidence="1">Protein NrdI</fullName>
    </recommendedName>
</protein>
<gene>
    <name evidence="1" type="primary">nrdI</name>
    <name type="ordered locus">Bcav_0096</name>
</gene>
<sequence length="138" mass="15215">MSRLVYFSSVSENTHRFVAKLGLAADRIPLRPTEPFLRAEDEYVLIVPTYGGGNGLGAVPKQVIKFLNDPGNRSLVRGVIAAGNTNFGEAFCIAGDIIAAKCDVPYLYRFELLGTDQDVLRVREGLGRFWLQRSQIPA</sequence>